<name>CARB_STRPZ</name>
<evidence type="ECO:0000255" key="1">
    <source>
        <dbReference type="HAMAP-Rule" id="MF_01210"/>
    </source>
</evidence>
<proteinExistence type="inferred from homology"/>
<feature type="chain" id="PRO_1000138902" description="Carbamoyl phosphate synthase large chain">
    <location>
        <begin position="1"/>
        <end position="1058"/>
    </location>
</feature>
<feature type="domain" description="ATP-grasp 1" evidence="1">
    <location>
        <begin position="133"/>
        <end position="327"/>
    </location>
</feature>
<feature type="domain" description="ATP-grasp 2" evidence="1">
    <location>
        <begin position="671"/>
        <end position="861"/>
    </location>
</feature>
<feature type="domain" description="MGS-like" evidence="1">
    <location>
        <begin position="930"/>
        <end position="1058"/>
    </location>
</feature>
<feature type="region of interest" description="Carboxyphosphate synthetic domain" evidence="1">
    <location>
        <begin position="1"/>
        <end position="401"/>
    </location>
</feature>
<feature type="region of interest" description="Oligomerization domain" evidence="1">
    <location>
        <begin position="402"/>
        <end position="546"/>
    </location>
</feature>
<feature type="region of interest" description="Carbamoyl phosphate synthetic domain" evidence="1">
    <location>
        <begin position="547"/>
        <end position="929"/>
    </location>
</feature>
<feature type="region of interest" description="Allosteric domain" evidence="1">
    <location>
        <begin position="930"/>
        <end position="1058"/>
    </location>
</feature>
<feature type="binding site" evidence="1">
    <location>
        <position position="129"/>
    </location>
    <ligand>
        <name>ATP</name>
        <dbReference type="ChEBI" id="CHEBI:30616"/>
        <label>1</label>
    </ligand>
</feature>
<feature type="binding site" evidence="1">
    <location>
        <position position="169"/>
    </location>
    <ligand>
        <name>ATP</name>
        <dbReference type="ChEBI" id="CHEBI:30616"/>
        <label>1</label>
    </ligand>
</feature>
<feature type="binding site" evidence="1">
    <location>
        <position position="175"/>
    </location>
    <ligand>
        <name>ATP</name>
        <dbReference type="ChEBI" id="CHEBI:30616"/>
        <label>1</label>
    </ligand>
</feature>
<feature type="binding site" evidence="1">
    <location>
        <position position="176"/>
    </location>
    <ligand>
        <name>ATP</name>
        <dbReference type="ChEBI" id="CHEBI:30616"/>
        <label>1</label>
    </ligand>
</feature>
<feature type="binding site" evidence="1">
    <location>
        <position position="208"/>
    </location>
    <ligand>
        <name>ATP</name>
        <dbReference type="ChEBI" id="CHEBI:30616"/>
        <label>1</label>
    </ligand>
</feature>
<feature type="binding site" evidence="1">
    <location>
        <position position="210"/>
    </location>
    <ligand>
        <name>ATP</name>
        <dbReference type="ChEBI" id="CHEBI:30616"/>
        <label>1</label>
    </ligand>
</feature>
<feature type="binding site" evidence="1">
    <location>
        <position position="215"/>
    </location>
    <ligand>
        <name>ATP</name>
        <dbReference type="ChEBI" id="CHEBI:30616"/>
        <label>1</label>
    </ligand>
</feature>
<feature type="binding site" evidence="1">
    <location>
        <position position="241"/>
    </location>
    <ligand>
        <name>ATP</name>
        <dbReference type="ChEBI" id="CHEBI:30616"/>
        <label>1</label>
    </ligand>
</feature>
<feature type="binding site" evidence="1">
    <location>
        <position position="242"/>
    </location>
    <ligand>
        <name>ATP</name>
        <dbReference type="ChEBI" id="CHEBI:30616"/>
        <label>1</label>
    </ligand>
</feature>
<feature type="binding site" evidence="1">
    <location>
        <position position="243"/>
    </location>
    <ligand>
        <name>ATP</name>
        <dbReference type="ChEBI" id="CHEBI:30616"/>
        <label>1</label>
    </ligand>
</feature>
<feature type="binding site" evidence="1">
    <location>
        <position position="284"/>
    </location>
    <ligand>
        <name>ATP</name>
        <dbReference type="ChEBI" id="CHEBI:30616"/>
        <label>1</label>
    </ligand>
</feature>
<feature type="binding site" evidence="1">
    <location>
        <position position="284"/>
    </location>
    <ligand>
        <name>Mg(2+)</name>
        <dbReference type="ChEBI" id="CHEBI:18420"/>
        <label>1</label>
    </ligand>
</feature>
<feature type="binding site" evidence="1">
    <location>
        <position position="284"/>
    </location>
    <ligand>
        <name>Mn(2+)</name>
        <dbReference type="ChEBI" id="CHEBI:29035"/>
        <label>1</label>
    </ligand>
</feature>
<feature type="binding site" evidence="1">
    <location>
        <position position="298"/>
    </location>
    <ligand>
        <name>ATP</name>
        <dbReference type="ChEBI" id="CHEBI:30616"/>
        <label>1</label>
    </ligand>
</feature>
<feature type="binding site" evidence="1">
    <location>
        <position position="298"/>
    </location>
    <ligand>
        <name>Mg(2+)</name>
        <dbReference type="ChEBI" id="CHEBI:18420"/>
        <label>1</label>
    </ligand>
</feature>
<feature type="binding site" evidence="1">
    <location>
        <position position="298"/>
    </location>
    <ligand>
        <name>Mg(2+)</name>
        <dbReference type="ChEBI" id="CHEBI:18420"/>
        <label>2</label>
    </ligand>
</feature>
<feature type="binding site" evidence="1">
    <location>
        <position position="298"/>
    </location>
    <ligand>
        <name>Mn(2+)</name>
        <dbReference type="ChEBI" id="CHEBI:29035"/>
        <label>1</label>
    </ligand>
</feature>
<feature type="binding site" evidence="1">
    <location>
        <position position="298"/>
    </location>
    <ligand>
        <name>Mn(2+)</name>
        <dbReference type="ChEBI" id="CHEBI:29035"/>
        <label>2</label>
    </ligand>
</feature>
<feature type="binding site" evidence="1">
    <location>
        <position position="300"/>
    </location>
    <ligand>
        <name>Mg(2+)</name>
        <dbReference type="ChEBI" id="CHEBI:18420"/>
        <label>2</label>
    </ligand>
</feature>
<feature type="binding site" evidence="1">
    <location>
        <position position="300"/>
    </location>
    <ligand>
        <name>Mn(2+)</name>
        <dbReference type="ChEBI" id="CHEBI:29035"/>
        <label>2</label>
    </ligand>
</feature>
<feature type="binding site" evidence="1">
    <location>
        <position position="707"/>
    </location>
    <ligand>
        <name>ATP</name>
        <dbReference type="ChEBI" id="CHEBI:30616"/>
        <label>2</label>
    </ligand>
</feature>
<feature type="binding site" evidence="1">
    <location>
        <position position="746"/>
    </location>
    <ligand>
        <name>ATP</name>
        <dbReference type="ChEBI" id="CHEBI:30616"/>
        <label>2</label>
    </ligand>
</feature>
<feature type="binding site" evidence="1">
    <location>
        <position position="748"/>
    </location>
    <ligand>
        <name>ATP</name>
        <dbReference type="ChEBI" id="CHEBI:30616"/>
        <label>2</label>
    </ligand>
</feature>
<feature type="binding site" evidence="1">
    <location>
        <position position="752"/>
    </location>
    <ligand>
        <name>ATP</name>
        <dbReference type="ChEBI" id="CHEBI:30616"/>
        <label>2</label>
    </ligand>
</feature>
<feature type="binding site" evidence="1">
    <location>
        <position position="777"/>
    </location>
    <ligand>
        <name>ATP</name>
        <dbReference type="ChEBI" id="CHEBI:30616"/>
        <label>2</label>
    </ligand>
</feature>
<feature type="binding site" evidence="1">
    <location>
        <position position="778"/>
    </location>
    <ligand>
        <name>ATP</name>
        <dbReference type="ChEBI" id="CHEBI:30616"/>
        <label>2</label>
    </ligand>
</feature>
<feature type="binding site" evidence="1">
    <location>
        <position position="779"/>
    </location>
    <ligand>
        <name>ATP</name>
        <dbReference type="ChEBI" id="CHEBI:30616"/>
        <label>2</label>
    </ligand>
</feature>
<feature type="binding site" evidence="1">
    <location>
        <position position="780"/>
    </location>
    <ligand>
        <name>ATP</name>
        <dbReference type="ChEBI" id="CHEBI:30616"/>
        <label>2</label>
    </ligand>
</feature>
<feature type="binding site" evidence="1">
    <location>
        <position position="820"/>
    </location>
    <ligand>
        <name>ATP</name>
        <dbReference type="ChEBI" id="CHEBI:30616"/>
        <label>2</label>
    </ligand>
</feature>
<feature type="binding site" evidence="1">
    <location>
        <position position="820"/>
    </location>
    <ligand>
        <name>Mg(2+)</name>
        <dbReference type="ChEBI" id="CHEBI:18420"/>
        <label>3</label>
    </ligand>
</feature>
<feature type="binding site" evidence="1">
    <location>
        <position position="820"/>
    </location>
    <ligand>
        <name>Mn(2+)</name>
        <dbReference type="ChEBI" id="CHEBI:29035"/>
        <label>3</label>
    </ligand>
</feature>
<feature type="binding site" evidence="1">
    <location>
        <position position="832"/>
    </location>
    <ligand>
        <name>ATP</name>
        <dbReference type="ChEBI" id="CHEBI:30616"/>
        <label>2</label>
    </ligand>
</feature>
<feature type="binding site" evidence="1">
    <location>
        <position position="832"/>
    </location>
    <ligand>
        <name>Mg(2+)</name>
        <dbReference type="ChEBI" id="CHEBI:18420"/>
        <label>3</label>
    </ligand>
</feature>
<feature type="binding site" evidence="1">
    <location>
        <position position="832"/>
    </location>
    <ligand>
        <name>Mg(2+)</name>
        <dbReference type="ChEBI" id="CHEBI:18420"/>
        <label>4</label>
    </ligand>
</feature>
<feature type="binding site" evidence="1">
    <location>
        <position position="832"/>
    </location>
    <ligand>
        <name>Mn(2+)</name>
        <dbReference type="ChEBI" id="CHEBI:29035"/>
        <label>3</label>
    </ligand>
</feature>
<feature type="binding site" evidence="1">
    <location>
        <position position="832"/>
    </location>
    <ligand>
        <name>Mn(2+)</name>
        <dbReference type="ChEBI" id="CHEBI:29035"/>
        <label>4</label>
    </ligand>
</feature>
<feature type="binding site" evidence="1">
    <location>
        <position position="834"/>
    </location>
    <ligand>
        <name>Mg(2+)</name>
        <dbReference type="ChEBI" id="CHEBI:18420"/>
        <label>4</label>
    </ligand>
</feature>
<feature type="binding site" evidence="1">
    <location>
        <position position="834"/>
    </location>
    <ligand>
        <name>Mn(2+)</name>
        <dbReference type="ChEBI" id="CHEBI:29035"/>
        <label>4</label>
    </ligand>
</feature>
<gene>
    <name evidence="1" type="primary">carB</name>
    <name type="ordered locus">Spy49_0654</name>
</gene>
<dbReference type="EC" id="6.3.4.16" evidence="1"/>
<dbReference type="EC" id="6.3.5.5" evidence="1"/>
<dbReference type="EMBL" id="CP000829">
    <property type="protein sequence ID" value="ACI60974.1"/>
    <property type="molecule type" value="Genomic_DNA"/>
</dbReference>
<dbReference type="SMR" id="B5XKW2"/>
<dbReference type="KEGG" id="soz:Spy49_0654"/>
<dbReference type="HOGENOM" id="CLU_000513_1_0_9"/>
<dbReference type="UniPathway" id="UPA00068">
    <property type="reaction ID" value="UER00171"/>
</dbReference>
<dbReference type="UniPathway" id="UPA00070">
    <property type="reaction ID" value="UER00115"/>
</dbReference>
<dbReference type="Proteomes" id="UP000001039">
    <property type="component" value="Chromosome"/>
</dbReference>
<dbReference type="GO" id="GO:0005737">
    <property type="term" value="C:cytoplasm"/>
    <property type="evidence" value="ECO:0007669"/>
    <property type="project" value="TreeGrafter"/>
</dbReference>
<dbReference type="GO" id="GO:0005524">
    <property type="term" value="F:ATP binding"/>
    <property type="evidence" value="ECO:0007669"/>
    <property type="project" value="UniProtKB-UniRule"/>
</dbReference>
<dbReference type="GO" id="GO:0004087">
    <property type="term" value="F:carbamoyl-phosphate synthase (ammonia) activity"/>
    <property type="evidence" value="ECO:0007669"/>
    <property type="project" value="RHEA"/>
</dbReference>
<dbReference type="GO" id="GO:0004088">
    <property type="term" value="F:carbamoyl-phosphate synthase (glutamine-hydrolyzing) activity"/>
    <property type="evidence" value="ECO:0007669"/>
    <property type="project" value="UniProtKB-UniRule"/>
</dbReference>
<dbReference type="GO" id="GO:0046872">
    <property type="term" value="F:metal ion binding"/>
    <property type="evidence" value="ECO:0007669"/>
    <property type="project" value="UniProtKB-KW"/>
</dbReference>
<dbReference type="GO" id="GO:0044205">
    <property type="term" value="P:'de novo' UMP biosynthetic process"/>
    <property type="evidence" value="ECO:0007669"/>
    <property type="project" value="UniProtKB-UniRule"/>
</dbReference>
<dbReference type="GO" id="GO:0006541">
    <property type="term" value="P:glutamine metabolic process"/>
    <property type="evidence" value="ECO:0007669"/>
    <property type="project" value="TreeGrafter"/>
</dbReference>
<dbReference type="GO" id="GO:0006526">
    <property type="term" value="P:L-arginine biosynthetic process"/>
    <property type="evidence" value="ECO:0007669"/>
    <property type="project" value="UniProtKB-UniRule"/>
</dbReference>
<dbReference type="CDD" id="cd01424">
    <property type="entry name" value="MGS_CPS_II"/>
    <property type="match status" value="1"/>
</dbReference>
<dbReference type="FunFam" id="1.10.1030.10:FF:000002">
    <property type="entry name" value="Carbamoyl-phosphate synthase large chain"/>
    <property type="match status" value="1"/>
</dbReference>
<dbReference type="FunFam" id="3.30.1490.20:FF:000001">
    <property type="entry name" value="Carbamoyl-phosphate synthase large chain"/>
    <property type="match status" value="1"/>
</dbReference>
<dbReference type="FunFam" id="3.30.470.20:FF:000001">
    <property type="entry name" value="Carbamoyl-phosphate synthase large chain"/>
    <property type="match status" value="1"/>
</dbReference>
<dbReference type="FunFam" id="3.30.470.20:FF:000026">
    <property type="entry name" value="Carbamoyl-phosphate synthase large chain"/>
    <property type="match status" value="1"/>
</dbReference>
<dbReference type="FunFam" id="3.40.50.20:FF:000001">
    <property type="entry name" value="Carbamoyl-phosphate synthase large chain"/>
    <property type="match status" value="2"/>
</dbReference>
<dbReference type="Gene3D" id="3.40.50.20">
    <property type="match status" value="2"/>
</dbReference>
<dbReference type="Gene3D" id="3.30.1490.20">
    <property type="entry name" value="ATP-grasp fold, A domain"/>
    <property type="match status" value="1"/>
</dbReference>
<dbReference type="Gene3D" id="3.30.470.20">
    <property type="entry name" value="ATP-grasp fold, B domain"/>
    <property type="match status" value="2"/>
</dbReference>
<dbReference type="Gene3D" id="1.10.1030.10">
    <property type="entry name" value="Carbamoyl-phosphate synthetase, large subunit oligomerisation domain"/>
    <property type="match status" value="1"/>
</dbReference>
<dbReference type="Gene3D" id="3.40.50.1380">
    <property type="entry name" value="Methylglyoxal synthase-like domain"/>
    <property type="match status" value="1"/>
</dbReference>
<dbReference type="HAMAP" id="MF_01210_A">
    <property type="entry name" value="CPSase_L_chain_A"/>
    <property type="match status" value="1"/>
</dbReference>
<dbReference type="HAMAP" id="MF_01210_B">
    <property type="entry name" value="CPSase_L_chain_B"/>
    <property type="match status" value="1"/>
</dbReference>
<dbReference type="InterPro" id="IPR011761">
    <property type="entry name" value="ATP-grasp"/>
</dbReference>
<dbReference type="InterPro" id="IPR013815">
    <property type="entry name" value="ATP_grasp_subdomain_1"/>
</dbReference>
<dbReference type="InterPro" id="IPR006275">
    <property type="entry name" value="CarbamoylP_synth_lsu"/>
</dbReference>
<dbReference type="InterPro" id="IPR005480">
    <property type="entry name" value="CarbamoylP_synth_lsu_oligo"/>
</dbReference>
<dbReference type="InterPro" id="IPR036897">
    <property type="entry name" value="CarbamoylP_synth_lsu_oligo_sf"/>
</dbReference>
<dbReference type="InterPro" id="IPR005479">
    <property type="entry name" value="CbamoylP_synth_lsu-like_ATP-bd"/>
</dbReference>
<dbReference type="InterPro" id="IPR005483">
    <property type="entry name" value="CbamoylP_synth_lsu_CPSase_dom"/>
</dbReference>
<dbReference type="InterPro" id="IPR011607">
    <property type="entry name" value="MGS-like_dom"/>
</dbReference>
<dbReference type="InterPro" id="IPR036914">
    <property type="entry name" value="MGS-like_dom_sf"/>
</dbReference>
<dbReference type="InterPro" id="IPR033937">
    <property type="entry name" value="MGS_CPS_CarB"/>
</dbReference>
<dbReference type="InterPro" id="IPR016185">
    <property type="entry name" value="PreATP-grasp_dom_sf"/>
</dbReference>
<dbReference type="NCBIfam" id="TIGR01369">
    <property type="entry name" value="CPSaseII_lrg"/>
    <property type="match status" value="1"/>
</dbReference>
<dbReference type="NCBIfam" id="NF003671">
    <property type="entry name" value="PRK05294.1"/>
    <property type="match status" value="1"/>
</dbReference>
<dbReference type="NCBIfam" id="NF009455">
    <property type="entry name" value="PRK12815.1"/>
    <property type="match status" value="1"/>
</dbReference>
<dbReference type="PANTHER" id="PTHR11405:SF53">
    <property type="entry name" value="CARBAMOYL-PHOSPHATE SYNTHASE [AMMONIA], MITOCHONDRIAL"/>
    <property type="match status" value="1"/>
</dbReference>
<dbReference type="PANTHER" id="PTHR11405">
    <property type="entry name" value="CARBAMOYLTRANSFERASE FAMILY MEMBER"/>
    <property type="match status" value="1"/>
</dbReference>
<dbReference type="Pfam" id="PF02786">
    <property type="entry name" value="CPSase_L_D2"/>
    <property type="match status" value="2"/>
</dbReference>
<dbReference type="Pfam" id="PF02787">
    <property type="entry name" value="CPSase_L_D3"/>
    <property type="match status" value="1"/>
</dbReference>
<dbReference type="Pfam" id="PF02142">
    <property type="entry name" value="MGS"/>
    <property type="match status" value="1"/>
</dbReference>
<dbReference type="PRINTS" id="PR00098">
    <property type="entry name" value="CPSASE"/>
</dbReference>
<dbReference type="SMART" id="SM01096">
    <property type="entry name" value="CPSase_L_D3"/>
    <property type="match status" value="1"/>
</dbReference>
<dbReference type="SMART" id="SM01209">
    <property type="entry name" value="GARS_A"/>
    <property type="match status" value="1"/>
</dbReference>
<dbReference type="SMART" id="SM00851">
    <property type="entry name" value="MGS"/>
    <property type="match status" value="1"/>
</dbReference>
<dbReference type="SUPFAM" id="SSF48108">
    <property type="entry name" value="Carbamoyl phosphate synthetase, large subunit connection domain"/>
    <property type="match status" value="1"/>
</dbReference>
<dbReference type="SUPFAM" id="SSF56059">
    <property type="entry name" value="Glutathione synthetase ATP-binding domain-like"/>
    <property type="match status" value="2"/>
</dbReference>
<dbReference type="SUPFAM" id="SSF52335">
    <property type="entry name" value="Methylglyoxal synthase-like"/>
    <property type="match status" value="1"/>
</dbReference>
<dbReference type="SUPFAM" id="SSF52440">
    <property type="entry name" value="PreATP-grasp domain"/>
    <property type="match status" value="2"/>
</dbReference>
<dbReference type="PROSITE" id="PS50975">
    <property type="entry name" value="ATP_GRASP"/>
    <property type="match status" value="2"/>
</dbReference>
<dbReference type="PROSITE" id="PS00866">
    <property type="entry name" value="CPSASE_1"/>
    <property type="match status" value="2"/>
</dbReference>
<dbReference type="PROSITE" id="PS00867">
    <property type="entry name" value="CPSASE_2"/>
    <property type="match status" value="2"/>
</dbReference>
<dbReference type="PROSITE" id="PS51855">
    <property type="entry name" value="MGS"/>
    <property type="match status" value="1"/>
</dbReference>
<sequence length="1058" mass="116540">MPKRKDIQKIMVIGSGPIIIGQAAEFDYAGTQACLALKEEGYKVILVNSNPATIMTDKEIADKVYIEPLTLEFVNRIIRKERPDAILPTLGGQTGLNMAMALSKAGILDDLEIELLGTKLSAIDQAEDRDLFKQLMQELDQPIPESTIVKTVDEAVTFARDIGYPVIVRPAFTLGGTGGGICSSEEELCEITENGLKLSPVTQCLIERSIAGFKEIEYEVMRDSADNALVVCNMENFDPVGIHTGDSIVFAPTQTLSDIENQMLRDASLKIIRALKIEGGCNVQLALDPYSFKYYVIEVNPRVSRSSALASKATGYPIAKLAAKIAVGLTLDEMINPITGTTYAMFEPTLDYVVAKIPRFPFDKFEHGERQLGTQMKATGEVMAIGRNLEESLLKACRSLEIGVCHNEMTSLSNISDEELVTKVIKAQDDRLFYLSEAIRRGYSIEELESLTKIDLFFLDKLLHIVEIEQDLQMHVEHLESLKKAKRYGFSDQKIAEIWQKDESDIRAMRHSHSLYPVYKMVDTCAAEFDAKTPYFYSTYELENESVQSNKESILVLGSGPIRIGQGVEFDYATVHSVKAIQKAGYEAIIMNSNPETVSTDFSVSDKLYFEPLTFEDVMNVIDLEQPKGVIVQFGGQTAINLAQALSEAGVTILGTQVEDLDRAEDRDLFEKALKELGIPQPQGQTATNEEEALEAAKKIGFPVLVRPSYVLGGRAMEIVENKEDLREYIRTAVKASPEHPILVDSYIFGKECEVDAISDGKSVLIPGIMEHIERAGVHSGDSMAVYPPQQLSKQIQETIAEYTKRLAIGLNCIGMMNVQFVIKNDQVYVIEVNPRASRTVPFLSKVPGIPMAQIATKLILGQPLKDLGYEDGLYPQSQLVHIKAPVFSFTKLAQVDSLLGPEMKSTGEVMGSDTSLEKALYKAFEANNSHLSEFGQIVFTIADDSKAEALSLARRFKAIGYQIMATQGTAAYFAEQGLSACLVGKIGDAANDIPTLVRHGHVQAIVNTVGIKRTADKDGQMIRSSAIEQGVPLFTALDTAKAMLTVLESRCFNIEAI</sequence>
<comment type="function">
    <text evidence="1">Large subunit of the glutamine-dependent carbamoyl phosphate synthetase (CPSase). CPSase catalyzes the formation of carbamoyl phosphate from the ammonia moiety of glutamine, carbonate, and phosphate donated by ATP, constituting the first step of 2 biosynthetic pathways, one leading to arginine and/or urea and the other to pyrimidine nucleotides. The large subunit (synthetase) binds the substrates ammonia (free or transferred from glutamine from the small subunit), hydrogencarbonate and ATP and carries out an ATP-coupled ligase reaction, activating hydrogencarbonate by forming carboxy phosphate which reacts with ammonia to form carbamoyl phosphate.</text>
</comment>
<comment type="catalytic activity">
    <reaction evidence="1">
        <text>hydrogencarbonate + L-glutamine + 2 ATP + H2O = carbamoyl phosphate + L-glutamate + 2 ADP + phosphate + 2 H(+)</text>
        <dbReference type="Rhea" id="RHEA:18633"/>
        <dbReference type="ChEBI" id="CHEBI:15377"/>
        <dbReference type="ChEBI" id="CHEBI:15378"/>
        <dbReference type="ChEBI" id="CHEBI:17544"/>
        <dbReference type="ChEBI" id="CHEBI:29985"/>
        <dbReference type="ChEBI" id="CHEBI:30616"/>
        <dbReference type="ChEBI" id="CHEBI:43474"/>
        <dbReference type="ChEBI" id="CHEBI:58228"/>
        <dbReference type="ChEBI" id="CHEBI:58359"/>
        <dbReference type="ChEBI" id="CHEBI:456216"/>
        <dbReference type="EC" id="6.3.5.5"/>
    </reaction>
</comment>
<comment type="catalytic activity">
    <molecule>Carbamoyl phosphate synthase large chain</molecule>
    <reaction evidence="1">
        <text>hydrogencarbonate + NH4(+) + 2 ATP = carbamoyl phosphate + 2 ADP + phosphate + 2 H(+)</text>
        <dbReference type="Rhea" id="RHEA:18029"/>
        <dbReference type="ChEBI" id="CHEBI:15378"/>
        <dbReference type="ChEBI" id="CHEBI:17544"/>
        <dbReference type="ChEBI" id="CHEBI:28938"/>
        <dbReference type="ChEBI" id="CHEBI:30616"/>
        <dbReference type="ChEBI" id="CHEBI:43474"/>
        <dbReference type="ChEBI" id="CHEBI:58228"/>
        <dbReference type="ChEBI" id="CHEBI:456216"/>
        <dbReference type="EC" id="6.3.4.16"/>
    </reaction>
</comment>
<comment type="cofactor">
    <cofactor evidence="1">
        <name>Mg(2+)</name>
        <dbReference type="ChEBI" id="CHEBI:18420"/>
    </cofactor>
    <cofactor evidence="1">
        <name>Mn(2+)</name>
        <dbReference type="ChEBI" id="CHEBI:29035"/>
    </cofactor>
    <text evidence="1">Binds 4 Mg(2+) or Mn(2+) ions per subunit.</text>
</comment>
<comment type="pathway">
    <text evidence="1">Amino-acid biosynthesis; L-arginine biosynthesis; carbamoyl phosphate from bicarbonate: step 1/1.</text>
</comment>
<comment type="pathway">
    <text evidence="1">Pyrimidine metabolism; UMP biosynthesis via de novo pathway; (S)-dihydroorotate from bicarbonate: step 1/3.</text>
</comment>
<comment type="subunit">
    <text evidence="1">Composed of two chains; the small (or glutamine) chain promotes the hydrolysis of glutamine to ammonia, which is used by the large (or ammonia) chain to synthesize carbamoyl phosphate. Tetramer of heterodimers (alpha,beta)4.</text>
</comment>
<comment type="domain">
    <text evidence="1">The large subunit is composed of 2 ATP-grasp domains that are involved in binding the 2 ATP molecules needed for carbamoyl phosphate synthesis. The N-terminal ATP-grasp domain (referred to as the carboxyphosphate synthetic component) catalyzes the ATP-dependent phosphorylation of hydrogencarbonate to carboxyphosphate and the subsequent nucleophilic attack by ammonia to form a carbamate intermediate. The C-terminal ATP-grasp domain (referred to as the carbamoyl phosphate synthetic component) then catalyzes the phosphorylation of carbamate with the second ATP to form the end product carbamoyl phosphate. The reactive and unstable enzyme intermediates are sequentially channeled from one active site to the next through the interior of the protein over a distance of at least 96 A.</text>
</comment>
<comment type="similarity">
    <text evidence="1">Belongs to the CarB family.</text>
</comment>
<reference key="1">
    <citation type="journal article" date="2008" name="J. Bacteriol.">
        <title>Genome sequence of a nephritogenic and highly transformable M49 strain of Streptococcus pyogenes.</title>
        <authorList>
            <person name="McShan W.M."/>
            <person name="Ferretti J.J."/>
            <person name="Karasawa T."/>
            <person name="Suvorov A.N."/>
            <person name="Lin S."/>
            <person name="Qin B."/>
            <person name="Jia H."/>
            <person name="Kenton S."/>
            <person name="Najar F."/>
            <person name="Wu H."/>
            <person name="Scott J."/>
            <person name="Roe B.A."/>
            <person name="Savic D.J."/>
        </authorList>
    </citation>
    <scope>NUCLEOTIDE SEQUENCE [LARGE SCALE GENOMIC DNA]</scope>
    <source>
        <strain>NZ131</strain>
    </source>
</reference>
<accession>B5XKW2</accession>
<organism>
    <name type="scientific">Streptococcus pyogenes serotype M49 (strain NZ131)</name>
    <dbReference type="NCBI Taxonomy" id="471876"/>
    <lineage>
        <taxon>Bacteria</taxon>
        <taxon>Bacillati</taxon>
        <taxon>Bacillota</taxon>
        <taxon>Bacilli</taxon>
        <taxon>Lactobacillales</taxon>
        <taxon>Streptococcaceae</taxon>
        <taxon>Streptococcus</taxon>
    </lineage>
</organism>
<protein>
    <recommendedName>
        <fullName evidence="1">Carbamoyl phosphate synthase large chain</fullName>
        <ecNumber evidence="1">6.3.4.16</ecNumber>
        <ecNumber evidence="1">6.3.5.5</ecNumber>
    </recommendedName>
    <alternativeName>
        <fullName evidence="1">Carbamoyl phosphate synthetase ammonia chain</fullName>
    </alternativeName>
</protein>
<keyword id="KW-0028">Amino-acid biosynthesis</keyword>
<keyword id="KW-0055">Arginine biosynthesis</keyword>
<keyword id="KW-0067">ATP-binding</keyword>
<keyword id="KW-0436">Ligase</keyword>
<keyword id="KW-0460">Magnesium</keyword>
<keyword id="KW-0464">Manganese</keyword>
<keyword id="KW-0479">Metal-binding</keyword>
<keyword id="KW-0547">Nucleotide-binding</keyword>
<keyword id="KW-0665">Pyrimidine biosynthesis</keyword>
<keyword id="KW-0677">Repeat</keyword>